<reference key="1">
    <citation type="journal article" date="2008" name="BMC Genomics">
        <title>The genome of Aeromonas salmonicida subsp. salmonicida A449: insights into the evolution of a fish pathogen.</title>
        <authorList>
            <person name="Reith M.E."/>
            <person name="Singh R.K."/>
            <person name="Curtis B."/>
            <person name="Boyd J.M."/>
            <person name="Bouevitch A."/>
            <person name="Kimball J."/>
            <person name="Munholland J."/>
            <person name="Murphy C."/>
            <person name="Sarty D."/>
            <person name="Williams J."/>
            <person name="Nash J.H."/>
            <person name="Johnson S.C."/>
            <person name="Brown L.L."/>
        </authorList>
    </citation>
    <scope>NUCLEOTIDE SEQUENCE [LARGE SCALE GENOMIC DNA]</scope>
    <source>
        <strain>A449</strain>
    </source>
</reference>
<name>XNI_AERS4</name>
<organism>
    <name type="scientific">Aeromonas salmonicida (strain A449)</name>
    <dbReference type="NCBI Taxonomy" id="382245"/>
    <lineage>
        <taxon>Bacteria</taxon>
        <taxon>Pseudomonadati</taxon>
        <taxon>Pseudomonadota</taxon>
        <taxon>Gammaproteobacteria</taxon>
        <taxon>Aeromonadales</taxon>
        <taxon>Aeromonadaceae</taxon>
        <taxon>Aeromonas</taxon>
    </lineage>
</organism>
<sequence>MPHLLIIDALNLIRRLHAVQAQQALTPAQALIATRANLINTCRKLLTGSEPTHVIAVFDGEIHSWRKEVYPAYKEGRTPMPVELREGLNTLQDAFWECGVDALLSQTDEADDLIATLASGIAQHGARATIISTDKGFCQLICPQIQIRDYFNKRWLDAAFVEQQYGVVPAQLVDFWALTGISGSNIKGVPGIGPKTATQLLQQYGSLSALLAACQQEEASKPLLKLRQYQDDALLAQRLVRLQRDIPLGFNLREIRYPPAPESEA</sequence>
<dbReference type="EC" id="3.1.-.-" evidence="1"/>
<dbReference type="EMBL" id="CP000644">
    <property type="protein sequence ID" value="ABO91175.1"/>
    <property type="molecule type" value="Genomic_DNA"/>
</dbReference>
<dbReference type="RefSeq" id="WP_005312011.1">
    <property type="nucleotide sequence ID" value="NC_009348.1"/>
</dbReference>
<dbReference type="SMR" id="A4SQK3"/>
<dbReference type="STRING" id="29491.GCA_000820065_03562"/>
<dbReference type="KEGG" id="asa:ASA_3182"/>
<dbReference type="eggNOG" id="COG0258">
    <property type="taxonomic scope" value="Bacteria"/>
</dbReference>
<dbReference type="HOGENOM" id="CLU_004675_1_2_6"/>
<dbReference type="Proteomes" id="UP000000225">
    <property type="component" value="Chromosome"/>
</dbReference>
<dbReference type="GO" id="GO:0008409">
    <property type="term" value="F:5'-3' exonuclease activity"/>
    <property type="evidence" value="ECO:0007669"/>
    <property type="project" value="InterPro"/>
</dbReference>
<dbReference type="GO" id="GO:0017108">
    <property type="term" value="F:5'-flap endonuclease activity"/>
    <property type="evidence" value="ECO:0007669"/>
    <property type="project" value="UniProtKB-UniRule"/>
</dbReference>
<dbReference type="GO" id="GO:0003677">
    <property type="term" value="F:DNA binding"/>
    <property type="evidence" value="ECO:0007669"/>
    <property type="project" value="UniProtKB-UniRule"/>
</dbReference>
<dbReference type="GO" id="GO:0000287">
    <property type="term" value="F:magnesium ion binding"/>
    <property type="evidence" value="ECO:0007669"/>
    <property type="project" value="UniProtKB-UniRule"/>
</dbReference>
<dbReference type="GO" id="GO:0030955">
    <property type="term" value="F:potassium ion binding"/>
    <property type="evidence" value="ECO:0007669"/>
    <property type="project" value="UniProtKB-UniRule"/>
</dbReference>
<dbReference type="GO" id="GO:0033567">
    <property type="term" value="P:DNA replication, Okazaki fragment processing"/>
    <property type="evidence" value="ECO:0007669"/>
    <property type="project" value="UniProtKB-UniRule"/>
</dbReference>
<dbReference type="CDD" id="cd09898">
    <property type="entry name" value="H3TH_53EXO"/>
    <property type="match status" value="1"/>
</dbReference>
<dbReference type="CDD" id="cd09859">
    <property type="entry name" value="PIN_53EXO"/>
    <property type="match status" value="1"/>
</dbReference>
<dbReference type="FunFam" id="1.10.150.20:FF:000003">
    <property type="entry name" value="DNA polymerase I"/>
    <property type="match status" value="1"/>
</dbReference>
<dbReference type="Gene3D" id="1.10.150.20">
    <property type="entry name" value="5' to 3' exonuclease, C-terminal subdomain"/>
    <property type="match status" value="1"/>
</dbReference>
<dbReference type="Gene3D" id="3.40.50.1010">
    <property type="entry name" value="5'-nuclease"/>
    <property type="match status" value="1"/>
</dbReference>
<dbReference type="HAMAP" id="MF_01192">
    <property type="entry name" value="Xni"/>
    <property type="match status" value="1"/>
</dbReference>
<dbReference type="InterPro" id="IPR020046">
    <property type="entry name" value="5-3_exonucl_a-hlix_arch_N"/>
</dbReference>
<dbReference type="InterPro" id="IPR002421">
    <property type="entry name" value="5-3_exonuclease"/>
</dbReference>
<dbReference type="InterPro" id="IPR036279">
    <property type="entry name" value="5-3_exonuclease_C_sf"/>
</dbReference>
<dbReference type="InterPro" id="IPR020045">
    <property type="entry name" value="DNA_polI_H3TH"/>
</dbReference>
<dbReference type="InterPro" id="IPR038969">
    <property type="entry name" value="FEN"/>
</dbReference>
<dbReference type="InterPro" id="IPR008918">
    <property type="entry name" value="HhH2"/>
</dbReference>
<dbReference type="InterPro" id="IPR029060">
    <property type="entry name" value="PIN-like_dom_sf"/>
</dbReference>
<dbReference type="InterPro" id="IPR022895">
    <property type="entry name" value="Xni"/>
</dbReference>
<dbReference type="NCBIfam" id="NF007017">
    <property type="entry name" value="PRK09482.1"/>
    <property type="match status" value="1"/>
</dbReference>
<dbReference type="PANTHER" id="PTHR42646:SF2">
    <property type="entry name" value="5'-3' EXONUCLEASE FAMILY PROTEIN"/>
    <property type="match status" value="1"/>
</dbReference>
<dbReference type="PANTHER" id="PTHR42646">
    <property type="entry name" value="FLAP ENDONUCLEASE XNI"/>
    <property type="match status" value="1"/>
</dbReference>
<dbReference type="Pfam" id="PF01367">
    <property type="entry name" value="5_3_exonuc"/>
    <property type="match status" value="1"/>
</dbReference>
<dbReference type="Pfam" id="PF02739">
    <property type="entry name" value="5_3_exonuc_N"/>
    <property type="match status" value="1"/>
</dbReference>
<dbReference type="SMART" id="SM00475">
    <property type="entry name" value="53EXOc"/>
    <property type="match status" value="1"/>
</dbReference>
<dbReference type="SMART" id="SM00279">
    <property type="entry name" value="HhH2"/>
    <property type="match status" value="1"/>
</dbReference>
<dbReference type="SUPFAM" id="SSF47807">
    <property type="entry name" value="5' to 3' exonuclease, C-terminal subdomain"/>
    <property type="match status" value="1"/>
</dbReference>
<dbReference type="SUPFAM" id="SSF88723">
    <property type="entry name" value="PIN domain-like"/>
    <property type="match status" value="1"/>
</dbReference>
<accession>A4SQK3</accession>
<gene>
    <name evidence="1" type="primary">xni</name>
    <name evidence="1" type="synonym">ygdG</name>
    <name type="ordered locus">ASA_3182</name>
</gene>
<feature type="chain" id="PRO_0000297857" description="Flap endonuclease Xni">
    <location>
        <begin position="1"/>
        <end position="265"/>
    </location>
</feature>
<feature type="domain" description="5'-3' exonuclease" evidence="1">
    <location>
        <begin position="167"/>
        <end position="260"/>
    </location>
</feature>
<feature type="region of interest" description="Interaction with DNA" evidence="1">
    <location>
        <begin position="191"/>
        <end position="196"/>
    </location>
</feature>
<feature type="binding site" evidence="1">
    <location>
        <position position="111"/>
    </location>
    <ligand>
        <name>Mg(2+)</name>
        <dbReference type="ChEBI" id="CHEBI:18420"/>
    </ligand>
</feature>
<feature type="binding site" evidence="1">
    <location>
        <position position="178"/>
    </location>
    <ligand>
        <name>K(+)</name>
        <dbReference type="ChEBI" id="CHEBI:29103"/>
    </ligand>
</feature>
<feature type="binding site" evidence="1">
    <location>
        <position position="189"/>
    </location>
    <ligand>
        <name>K(+)</name>
        <dbReference type="ChEBI" id="CHEBI:29103"/>
    </ligand>
</feature>
<feature type="binding site" evidence="1">
    <location>
        <position position="192"/>
    </location>
    <ligand>
        <name>K(+)</name>
        <dbReference type="ChEBI" id="CHEBI:29103"/>
    </ligand>
</feature>
<comment type="function">
    <text evidence="1">Has flap endonuclease activity. During DNA replication, flap endonucleases cleave the 5'-overhanging flap structure that is generated by displacement synthesis when DNA polymerase encounters the 5'-end of a downstream Okazaki fragment.</text>
</comment>
<comment type="cofactor">
    <cofactor evidence="1">
        <name>Mg(2+)</name>
        <dbReference type="ChEBI" id="CHEBI:18420"/>
    </cofactor>
    <text evidence="1">Binds 2 Mg(2+) per subunit. Only one magnesium ion has a direct interaction with the protein, the other interactions are indirect.</text>
</comment>
<comment type="cofactor">
    <cofactor evidence="1">
        <name>K(+)</name>
        <dbReference type="ChEBI" id="CHEBI:29103"/>
    </cofactor>
    <text evidence="1">Binds 1 K(+) per subunit. The potassium ion strongly increases the affinity for DNA.</text>
</comment>
<comment type="similarity">
    <text evidence="1">Belongs to the Xni family.</text>
</comment>
<proteinExistence type="inferred from homology"/>
<protein>
    <recommendedName>
        <fullName evidence="1">Flap endonuclease Xni</fullName>
        <shortName evidence="1">FEN</shortName>
        <ecNumber evidence="1">3.1.-.-</ecNumber>
    </recommendedName>
</protein>
<keyword id="KW-0238">DNA-binding</keyword>
<keyword id="KW-0255">Endonuclease</keyword>
<keyword id="KW-0378">Hydrolase</keyword>
<keyword id="KW-0460">Magnesium</keyword>
<keyword id="KW-0479">Metal-binding</keyword>
<keyword id="KW-0540">Nuclease</keyword>
<keyword id="KW-0630">Potassium</keyword>
<evidence type="ECO:0000255" key="1">
    <source>
        <dbReference type="HAMAP-Rule" id="MF_01192"/>
    </source>
</evidence>